<gene>
    <name type="primary">TTL1</name>
    <name type="ordered locus">At1g53300</name>
    <name type="ORF">F12M16.20</name>
</gene>
<evidence type="ECO:0000250" key="1">
    <source>
        <dbReference type="UniProtKB" id="Q9SIN1"/>
    </source>
</evidence>
<evidence type="ECO:0000256" key="2">
    <source>
        <dbReference type="SAM" id="MobiDB-lite"/>
    </source>
</evidence>
<evidence type="ECO:0000269" key="3">
    <source>
    </source>
</evidence>
<evidence type="ECO:0000269" key="4">
    <source>
    </source>
</evidence>
<evidence type="ECO:0007744" key="5">
    <source>
    </source>
</evidence>
<accession>Q9MAH1</accession>
<reference key="1">
    <citation type="journal article" date="2000" name="Nature">
        <title>Sequence and analysis of chromosome 1 of the plant Arabidopsis thaliana.</title>
        <authorList>
            <person name="Theologis A."/>
            <person name="Ecker J.R."/>
            <person name="Palm C.J."/>
            <person name="Federspiel N.A."/>
            <person name="Kaul S."/>
            <person name="White O."/>
            <person name="Alonso J."/>
            <person name="Altafi H."/>
            <person name="Araujo R."/>
            <person name="Bowman C.L."/>
            <person name="Brooks S.Y."/>
            <person name="Buehler E."/>
            <person name="Chan A."/>
            <person name="Chao Q."/>
            <person name="Chen H."/>
            <person name="Cheuk R.F."/>
            <person name="Chin C.W."/>
            <person name="Chung M.K."/>
            <person name="Conn L."/>
            <person name="Conway A.B."/>
            <person name="Conway A.R."/>
            <person name="Creasy T.H."/>
            <person name="Dewar K."/>
            <person name="Dunn P."/>
            <person name="Etgu P."/>
            <person name="Feldblyum T.V."/>
            <person name="Feng J.-D."/>
            <person name="Fong B."/>
            <person name="Fujii C.Y."/>
            <person name="Gill J.E."/>
            <person name="Goldsmith A.D."/>
            <person name="Haas B."/>
            <person name="Hansen N.F."/>
            <person name="Hughes B."/>
            <person name="Huizar L."/>
            <person name="Hunter J.L."/>
            <person name="Jenkins J."/>
            <person name="Johnson-Hopson C."/>
            <person name="Khan S."/>
            <person name="Khaykin E."/>
            <person name="Kim C.J."/>
            <person name="Koo H.L."/>
            <person name="Kremenetskaia I."/>
            <person name="Kurtz D.B."/>
            <person name="Kwan A."/>
            <person name="Lam B."/>
            <person name="Langin-Hooper S."/>
            <person name="Lee A."/>
            <person name="Lee J.M."/>
            <person name="Lenz C.A."/>
            <person name="Li J.H."/>
            <person name="Li Y.-P."/>
            <person name="Lin X."/>
            <person name="Liu S.X."/>
            <person name="Liu Z.A."/>
            <person name="Luros J.S."/>
            <person name="Maiti R."/>
            <person name="Marziali A."/>
            <person name="Militscher J."/>
            <person name="Miranda M."/>
            <person name="Nguyen M."/>
            <person name="Nierman W.C."/>
            <person name="Osborne B.I."/>
            <person name="Pai G."/>
            <person name="Peterson J."/>
            <person name="Pham P.K."/>
            <person name="Rizzo M."/>
            <person name="Rooney T."/>
            <person name="Rowley D."/>
            <person name="Sakano H."/>
            <person name="Salzberg S.L."/>
            <person name="Schwartz J.R."/>
            <person name="Shinn P."/>
            <person name="Southwick A.M."/>
            <person name="Sun H."/>
            <person name="Tallon L.J."/>
            <person name="Tambunga G."/>
            <person name="Toriumi M.J."/>
            <person name="Town C.D."/>
            <person name="Utterback T."/>
            <person name="Van Aken S."/>
            <person name="Vaysberg M."/>
            <person name="Vysotskaia V.S."/>
            <person name="Walker M."/>
            <person name="Wu D."/>
            <person name="Yu G."/>
            <person name="Fraser C.M."/>
            <person name="Venter J.C."/>
            <person name="Davis R.W."/>
        </authorList>
    </citation>
    <scope>NUCLEOTIDE SEQUENCE [LARGE SCALE GENOMIC DNA]</scope>
    <source>
        <strain>cv. Columbia</strain>
    </source>
</reference>
<reference key="2">
    <citation type="journal article" date="2017" name="Plant J.">
        <title>Araport11: a complete reannotation of the Arabidopsis thaliana reference genome.</title>
        <authorList>
            <person name="Cheng C.Y."/>
            <person name="Krishnakumar V."/>
            <person name="Chan A.P."/>
            <person name="Thibaud-Nissen F."/>
            <person name="Schobel S."/>
            <person name="Town C.D."/>
        </authorList>
    </citation>
    <scope>GENOME REANNOTATION</scope>
    <source>
        <strain>cv. Columbia</strain>
    </source>
</reference>
<reference key="3">
    <citation type="journal article" date="2003" name="Science">
        <title>Empirical analysis of transcriptional activity in the Arabidopsis genome.</title>
        <authorList>
            <person name="Yamada K."/>
            <person name="Lim J."/>
            <person name="Dale J.M."/>
            <person name="Chen H."/>
            <person name="Shinn P."/>
            <person name="Palm C.J."/>
            <person name="Southwick A.M."/>
            <person name="Wu H.C."/>
            <person name="Kim C.J."/>
            <person name="Nguyen M."/>
            <person name="Pham P.K."/>
            <person name="Cheuk R.F."/>
            <person name="Karlin-Newmann G."/>
            <person name="Liu S.X."/>
            <person name="Lam B."/>
            <person name="Sakano H."/>
            <person name="Wu T."/>
            <person name="Yu G."/>
            <person name="Miranda M."/>
            <person name="Quach H.L."/>
            <person name="Tripp M."/>
            <person name="Chang C.H."/>
            <person name="Lee J.M."/>
            <person name="Toriumi M.J."/>
            <person name="Chan M.M."/>
            <person name="Tang C.C."/>
            <person name="Onodera C.S."/>
            <person name="Deng J.M."/>
            <person name="Akiyama K."/>
            <person name="Ansari Y."/>
            <person name="Arakawa T."/>
            <person name="Banh J."/>
            <person name="Banno F."/>
            <person name="Bowser L."/>
            <person name="Brooks S.Y."/>
            <person name="Carninci P."/>
            <person name="Chao Q."/>
            <person name="Choy N."/>
            <person name="Enju A."/>
            <person name="Goldsmith A.D."/>
            <person name="Gurjal M."/>
            <person name="Hansen N.F."/>
            <person name="Hayashizaki Y."/>
            <person name="Johnson-Hopson C."/>
            <person name="Hsuan V.W."/>
            <person name="Iida K."/>
            <person name="Karnes M."/>
            <person name="Khan S."/>
            <person name="Koesema E."/>
            <person name="Ishida J."/>
            <person name="Jiang P.X."/>
            <person name="Jones T."/>
            <person name="Kawai J."/>
            <person name="Kamiya A."/>
            <person name="Meyers C."/>
            <person name="Nakajima M."/>
            <person name="Narusaka M."/>
            <person name="Seki M."/>
            <person name="Sakurai T."/>
            <person name="Satou M."/>
            <person name="Tamse R."/>
            <person name="Vaysberg M."/>
            <person name="Wallender E.K."/>
            <person name="Wong C."/>
            <person name="Yamamura Y."/>
            <person name="Yuan S."/>
            <person name="Shinozaki K."/>
            <person name="Davis R.W."/>
            <person name="Theologis A."/>
            <person name="Ecker J.R."/>
        </authorList>
    </citation>
    <scope>NUCLEOTIDE SEQUENCE [LARGE SCALE MRNA]</scope>
    <source>
        <strain>cv. Columbia</strain>
    </source>
</reference>
<reference key="4">
    <citation type="journal article" date="2006" name="Plant Physiol.">
        <title>The Arabidopsis tetratricopeptide repeat-containing protein TTL1 is required for osmotic stress responses and abscisic acid sensitivity.</title>
        <authorList>
            <person name="Rosado A."/>
            <person name="Schapire A.L."/>
            <person name="Bressan R.A."/>
            <person name="Harfouche A.L."/>
            <person name="Hasegawa P.M."/>
            <person name="Valpuesta V."/>
            <person name="Botella M.A."/>
        </authorList>
    </citation>
    <scope>FUNCTION</scope>
    <scope>TISSUE SPECIFICITY</scope>
    <scope>GENE FAMILY</scope>
    <scope>INDUCTION</scope>
    <scope>DISRUPTION PHENOTYPE</scope>
</reference>
<reference key="5">
    <citation type="journal article" date="2009" name="Plant Physiol.">
        <title>Large-scale Arabidopsis phosphoproteome profiling reveals novel chloroplast kinase substrates and phosphorylation networks.</title>
        <authorList>
            <person name="Reiland S."/>
            <person name="Messerli G."/>
            <person name="Baerenfaller K."/>
            <person name="Gerrits B."/>
            <person name="Endler A."/>
            <person name="Grossmann J."/>
            <person name="Gruissem W."/>
            <person name="Baginsky S."/>
        </authorList>
    </citation>
    <scope>PHOSPHORYLATION [LARGE SCALE ANALYSIS] AT SER-42</scope>
    <scope>IDENTIFICATION BY MASS SPECTROMETRY [LARGE SCALE ANALYSIS]</scope>
</reference>
<reference key="6">
    <citation type="journal article" date="2012" name="Plant Physiol.">
        <title>The Arabidopsis thaliana TETRATRICO PEPTIDE THIOREDOXIN-LIKE gene family is required for osmotic stress tolerance and male sporogenesis.</title>
        <authorList>
            <person name="Lakhssassi N."/>
            <person name="Doblas V.G."/>
            <person name="Rosado A."/>
            <person name="Esteban Del Valle A."/>
            <person name="Pose D."/>
            <person name="Jimenez A.J."/>
            <person name="Castillo A.G."/>
            <person name="Valpuesta V."/>
            <person name="Borsani O."/>
            <person name="Botella M.A."/>
        </authorList>
    </citation>
    <scope>FUNCTION</scope>
    <scope>TISSUE SPECIFICITY</scope>
    <scope>INDUCTION</scope>
    <scope>DISRUPTION PHENOTYPE</scope>
</reference>
<dbReference type="EMBL" id="AC008007">
    <property type="protein sequence ID" value="AAF69536.1"/>
    <property type="molecule type" value="Genomic_DNA"/>
</dbReference>
<dbReference type="EMBL" id="CP002684">
    <property type="protein sequence ID" value="AEE32920.1"/>
    <property type="molecule type" value="Genomic_DNA"/>
</dbReference>
<dbReference type="EMBL" id="BT006444">
    <property type="protein sequence ID" value="AAP21252.1"/>
    <property type="molecule type" value="mRNA"/>
</dbReference>
<dbReference type="RefSeq" id="NP_175737.1">
    <property type="nucleotide sequence ID" value="NM_104208.3"/>
</dbReference>
<dbReference type="SMR" id="Q9MAH1"/>
<dbReference type="FunCoup" id="Q9MAH1">
    <property type="interactions" value="277"/>
</dbReference>
<dbReference type="STRING" id="3702.Q9MAH1"/>
<dbReference type="iPTMnet" id="Q9MAH1"/>
<dbReference type="PaxDb" id="3702-AT1G53300.1"/>
<dbReference type="ProteomicsDB" id="232365"/>
<dbReference type="EnsemblPlants" id="AT1G53300.1">
    <property type="protein sequence ID" value="AT1G53300.1"/>
    <property type="gene ID" value="AT1G53300"/>
</dbReference>
<dbReference type="GeneID" id="841764"/>
<dbReference type="Gramene" id="AT1G53300.1">
    <property type="protein sequence ID" value="AT1G53300.1"/>
    <property type="gene ID" value="AT1G53300"/>
</dbReference>
<dbReference type="KEGG" id="ath:AT1G53300"/>
<dbReference type="Araport" id="AT1G53300"/>
<dbReference type="TAIR" id="AT1G53300">
    <property type="gene designation" value="TTL1"/>
</dbReference>
<dbReference type="eggNOG" id="KOG0907">
    <property type="taxonomic scope" value="Eukaryota"/>
</dbReference>
<dbReference type="eggNOG" id="KOG1124">
    <property type="taxonomic scope" value="Eukaryota"/>
</dbReference>
<dbReference type="HOGENOM" id="CLU_015299_0_0_1"/>
<dbReference type="InParanoid" id="Q9MAH1"/>
<dbReference type="OMA" id="NSKMERW"/>
<dbReference type="PhylomeDB" id="Q9MAH1"/>
<dbReference type="PRO" id="PR:Q9MAH1"/>
<dbReference type="Proteomes" id="UP000006548">
    <property type="component" value="Chromosome 1"/>
</dbReference>
<dbReference type="ExpressionAtlas" id="Q9MAH1">
    <property type="expression patterns" value="baseline and differential"/>
</dbReference>
<dbReference type="GO" id="GO:0009738">
    <property type="term" value="P:abscisic acid-activated signaling pathway"/>
    <property type="evidence" value="ECO:0007669"/>
    <property type="project" value="UniProtKB-KW"/>
</dbReference>
<dbReference type="GO" id="GO:0009789">
    <property type="term" value="P:positive regulation of abscisic acid-activated signaling pathway"/>
    <property type="evidence" value="ECO:0000315"/>
    <property type="project" value="UniProtKB"/>
</dbReference>
<dbReference type="GO" id="GO:0009737">
    <property type="term" value="P:response to abscisic acid"/>
    <property type="evidence" value="ECO:0000270"/>
    <property type="project" value="UniProtKB"/>
</dbReference>
<dbReference type="GO" id="GO:0006970">
    <property type="term" value="P:response to osmotic stress"/>
    <property type="evidence" value="ECO:0000315"/>
    <property type="project" value="UniProtKB"/>
</dbReference>
<dbReference type="GO" id="GO:0009651">
    <property type="term" value="P:response to salt stress"/>
    <property type="evidence" value="ECO:0000315"/>
    <property type="project" value="UniProtKB"/>
</dbReference>
<dbReference type="CDD" id="cd02947">
    <property type="entry name" value="TRX_family"/>
    <property type="match status" value="1"/>
</dbReference>
<dbReference type="FunFam" id="1.25.40.10:FF:000534">
    <property type="entry name" value="TPR repeat-containing thioredoxin TTL4"/>
    <property type="match status" value="1"/>
</dbReference>
<dbReference type="FunFam" id="3.40.30.10:FF:000211">
    <property type="entry name" value="TPR repeat-containing thioredoxin TTL4"/>
    <property type="match status" value="1"/>
</dbReference>
<dbReference type="Gene3D" id="3.40.30.10">
    <property type="entry name" value="Glutaredoxin"/>
    <property type="match status" value="1"/>
</dbReference>
<dbReference type="Gene3D" id="1.25.40.10">
    <property type="entry name" value="Tetratricopeptide repeat domain"/>
    <property type="match status" value="1"/>
</dbReference>
<dbReference type="InterPro" id="IPR036249">
    <property type="entry name" value="Thioredoxin-like_sf"/>
</dbReference>
<dbReference type="InterPro" id="IPR013766">
    <property type="entry name" value="Thioredoxin_domain"/>
</dbReference>
<dbReference type="InterPro" id="IPR011990">
    <property type="entry name" value="TPR-like_helical_dom_sf"/>
</dbReference>
<dbReference type="InterPro" id="IPR019734">
    <property type="entry name" value="TPR_rpt"/>
</dbReference>
<dbReference type="InterPro" id="IPR044534">
    <property type="entry name" value="TTL1-4"/>
</dbReference>
<dbReference type="PANTHER" id="PTHR46050">
    <property type="entry name" value="TPR REPEAT-CONTAINING THIOREDOXIN"/>
    <property type="match status" value="1"/>
</dbReference>
<dbReference type="PANTHER" id="PTHR46050:SF3">
    <property type="entry name" value="TPR REPEAT-CONTAINING THIOREDOXIN TTL1"/>
    <property type="match status" value="1"/>
</dbReference>
<dbReference type="Pfam" id="PF00085">
    <property type="entry name" value="Thioredoxin"/>
    <property type="match status" value="1"/>
</dbReference>
<dbReference type="Pfam" id="PF00515">
    <property type="entry name" value="TPR_1"/>
    <property type="match status" value="1"/>
</dbReference>
<dbReference type="Pfam" id="PF13414">
    <property type="entry name" value="TPR_11"/>
    <property type="match status" value="1"/>
</dbReference>
<dbReference type="Pfam" id="PF13181">
    <property type="entry name" value="TPR_8"/>
    <property type="match status" value="1"/>
</dbReference>
<dbReference type="SMART" id="SM00028">
    <property type="entry name" value="TPR"/>
    <property type="match status" value="6"/>
</dbReference>
<dbReference type="SUPFAM" id="SSF52833">
    <property type="entry name" value="Thioredoxin-like"/>
    <property type="match status" value="1"/>
</dbReference>
<dbReference type="SUPFAM" id="SSF48452">
    <property type="entry name" value="TPR-like"/>
    <property type="match status" value="1"/>
</dbReference>
<dbReference type="PROSITE" id="PS50005">
    <property type="entry name" value="TPR"/>
    <property type="match status" value="5"/>
</dbReference>
<dbReference type="PROSITE" id="PS50293">
    <property type="entry name" value="TPR_REGION"/>
    <property type="match status" value="2"/>
</dbReference>
<protein>
    <recommendedName>
        <fullName>TPR repeat-containing thioredoxin TTL1</fullName>
    </recommendedName>
    <alternativeName>
        <fullName>Tetratricopeptide repeat thioredoxin-like 1</fullName>
    </alternativeName>
</protein>
<feature type="chain" id="PRO_0000394549" description="TPR repeat-containing thioredoxin TTL1">
    <location>
        <begin position="1"/>
        <end position="699"/>
    </location>
</feature>
<feature type="repeat" description="TPR 1">
    <location>
        <begin position="227"/>
        <end position="260"/>
    </location>
</feature>
<feature type="repeat" description="TPR 2">
    <location>
        <begin position="262"/>
        <end position="294"/>
    </location>
</feature>
<feature type="repeat" description="TPR 3">
    <location>
        <begin position="296"/>
        <end position="328"/>
    </location>
</feature>
<feature type="repeat" description="TPR 4">
    <location>
        <begin position="419"/>
        <end position="452"/>
    </location>
</feature>
<feature type="repeat" description="TPR 5">
    <location>
        <begin position="465"/>
        <end position="498"/>
    </location>
</feature>
<feature type="repeat" description="TPR 6">
    <location>
        <begin position="499"/>
        <end position="532"/>
    </location>
</feature>
<feature type="repeat" description="TPR 7">
    <location>
        <begin position="534"/>
        <end position="566"/>
    </location>
</feature>
<feature type="domain" description="Thioredoxin">
    <location>
        <begin position="605"/>
        <end position="691"/>
    </location>
</feature>
<feature type="region of interest" description="Disordered" evidence="2">
    <location>
        <begin position="1"/>
        <end position="211"/>
    </location>
</feature>
<feature type="compositionally biased region" description="Basic and acidic residues" evidence="2">
    <location>
        <begin position="9"/>
        <end position="20"/>
    </location>
</feature>
<feature type="compositionally biased region" description="Low complexity" evidence="2">
    <location>
        <begin position="52"/>
        <end position="70"/>
    </location>
</feature>
<feature type="compositionally biased region" description="Low complexity" evidence="2">
    <location>
        <begin position="83"/>
        <end position="135"/>
    </location>
</feature>
<feature type="compositionally biased region" description="Gly residues" evidence="2">
    <location>
        <begin position="166"/>
        <end position="182"/>
    </location>
</feature>
<feature type="compositionally biased region" description="Low complexity" evidence="2">
    <location>
        <begin position="195"/>
        <end position="210"/>
    </location>
</feature>
<feature type="modified residue" description="Phosphoserine" evidence="1">
    <location>
        <position position="39"/>
    </location>
</feature>
<feature type="modified residue" description="Phosphoserine" evidence="5">
    <location>
        <position position="42"/>
    </location>
</feature>
<keyword id="KW-0938">Abscisic acid signaling pathway</keyword>
<keyword id="KW-0597">Phosphoprotein</keyword>
<keyword id="KW-1185">Reference proteome</keyword>
<keyword id="KW-0677">Repeat</keyword>
<keyword id="KW-0346">Stress response</keyword>
<keyword id="KW-0802">TPR repeat</keyword>
<comment type="function">
    <text evidence="3 4">Involved in responses to osmotic stress and abscisic acid (ABA). May act as a positive regulator of ABA signaling during germination and seedling development under stress.</text>
</comment>
<comment type="tissue specificity">
    <text evidence="3 4">Expressed in the root elongation zone, stele, root cap, embryo vascular system, leaf axilar buds, silique abscission zone and guard cells.</text>
</comment>
<comment type="induction">
    <text evidence="3 4">By salt and ABA treatments.</text>
</comment>
<comment type="disruption phenotype">
    <text evidence="3 4">No visible phenotype under normal growth conditions, but mutant seedlings show reduced root elongation under salt stress and increased germination rates under osmotic stress and exogenous ABA treatments.</text>
</comment>
<proteinExistence type="evidence at protein level"/>
<organism>
    <name type="scientific">Arabidopsis thaliana</name>
    <name type="common">Mouse-ear cress</name>
    <dbReference type="NCBI Taxonomy" id="3702"/>
    <lineage>
        <taxon>Eukaryota</taxon>
        <taxon>Viridiplantae</taxon>
        <taxon>Streptophyta</taxon>
        <taxon>Embryophyta</taxon>
        <taxon>Tracheophyta</taxon>
        <taxon>Spermatophyta</taxon>
        <taxon>Magnoliopsida</taxon>
        <taxon>eudicotyledons</taxon>
        <taxon>Gunneridae</taxon>
        <taxon>Pentapetalae</taxon>
        <taxon>rosids</taxon>
        <taxon>malvids</taxon>
        <taxon>Brassicales</taxon>
        <taxon>Brassicaceae</taxon>
        <taxon>Camelineae</taxon>
        <taxon>Arabidopsis</taxon>
    </lineage>
</organism>
<sequence>MPKSVKPISESDKLSDHLRDSSLTSEINKPDFRELDLGSPVSPLRSQPRGLTTTTTTTTTSSSSSSSSGSVTGRIKHAPVIGRSNSVRSQSNSSSGNNNLRPRSDSATTSSSSHSQPLLSSSSSSATSPAPTSPANVLPTGNICPSGKIQITGMTQSRSRSDVLGSGTGTYGHGSIMRGGGISPAKPTNTGGGSNSPVNVGSSSRSSSTVATGETPIWKKAILGSDSEEVKRVGNEMYRKGLFNEALKLYDRAIALSPTNAAYRSNRAAALIGLSRIGEAVKECEDAVRSDPNYGRAHHRLALLLIRLGQVNSARKHLCFLGRPSDPMELQKLEAVEKHLIKCVDARRVTDWKTVLIEADAAIVSGADFSPQLFMCKVEAFLKLHRLDDAQSKLLEVPKVEPFPVSCSQTRFSGMACEAYIYFVKAQIEMALGRFENAVMAAEKASQIDPRCNEVAMLHNTVTLVARARARGNDLYKSERYTEASSAYAEGLRLDPCNAILYCNRAACWFKLGMWERSIEDCNQALRYQPSYTKPLLRRAASNSKMERWGAAVSDYEALIRELPHDKEVAESLFHAQVALKKSRGEEVLNMEFGGEVEEIYSLEQFKSAMNLPGVSVIHFSTASDHQCKQISPFVDSLCTRYPSIHFLKVDIDKCPSIGNAENVRVVPTVKIYKNGSRVKEIVCPSKEVLEYSVRHYSG</sequence>
<name>TTL1_ARATH</name>